<keyword id="KW-0903">Direct protein sequencing</keyword>
<proteinExistence type="evidence at protein level"/>
<sequence length="17" mass="1756">ANEAKVVLVADNVQGDN</sequence>
<protein>
    <recommendedName>
        <fullName>29 kDa immunogenic protein</fullName>
    </recommendedName>
</protein>
<accession>P81784</accession>
<feature type="chain" id="PRO_0000064785" description="29 kDa immunogenic protein">
    <location>
        <begin position="1"/>
        <end position="17" status="greater than"/>
    </location>
</feature>
<feature type="non-terminal residue">
    <location>
        <position position="17"/>
    </location>
</feature>
<organism>
    <name type="scientific">Porphyromonas gingivalis</name>
    <name type="common">Bacteroides gingivalis</name>
    <dbReference type="NCBI Taxonomy" id="837"/>
    <lineage>
        <taxon>Bacteria</taxon>
        <taxon>Pseudomonadati</taxon>
        <taxon>Bacteroidota</taxon>
        <taxon>Bacteroidia</taxon>
        <taxon>Bacteroidales</taxon>
        <taxon>Porphyromonadaceae</taxon>
        <taxon>Porphyromonas</taxon>
    </lineage>
</organism>
<reference key="1">
    <citation type="journal article" date="2000" name="Vet. Microbiol.">
        <title>Serum antibody responses of cats to soluble whole cell antigens of feline Porphyromonas gingivalis.</title>
        <authorList>
            <person name="Norris J.M."/>
            <person name="Love D.N."/>
        </authorList>
    </citation>
    <scope>PROTEIN SEQUENCE</scope>
    <source>
        <strain>VPB 3547</strain>
    </source>
</reference>
<name>B29K_PORGN</name>